<name>IMM3_ECOLX</name>
<organism>
    <name type="scientific">Escherichia coli</name>
    <dbReference type="NCBI Taxonomy" id="562"/>
    <lineage>
        <taxon>Bacteria</taxon>
        <taxon>Pseudomonadati</taxon>
        <taxon>Pseudomonadota</taxon>
        <taxon>Gammaproteobacteria</taxon>
        <taxon>Enterobacterales</taxon>
        <taxon>Enterobacteriaceae</taxon>
        <taxon>Escherichia</taxon>
    </lineage>
</organism>
<keyword id="KW-0002">3D-structure</keyword>
<keyword id="KW-0079">Bacteriocin immunity</keyword>
<keyword id="KW-0614">Plasmid</keyword>
<accession>P02984</accession>
<proteinExistence type="evidence at protein level"/>
<dbReference type="EMBL" id="J01574">
    <property type="protein sequence ID" value="AAA88417.1"/>
    <property type="molecule type" value="Genomic_DNA"/>
</dbReference>
<dbReference type="EMBL" id="X02397">
    <property type="protein sequence ID" value="CAA26242.1"/>
    <property type="molecule type" value="Genomic_DNA"/>
</dbReference>
<dbReference type="EMBL" id="X01162">
    <property type="protein sequence ID" value="CAA25608.1"/>
    <property type="molecule type" value="Genomic_DNA"/>
</dbReference>
<dbReference type="EMBL" id="M26136">
    <property type="protein sequence ID" value="AAA98285.1"/>
    <property type="molecule type" value="Genomic_DNA"/>
</dbReference>
<dbReference type="PIR" id="B91307">
    <property type="entry name" value="IMECE3"/>
</dbReference>
<dbReference type="RefSeq" id="WP_000523346.1">
    <property type="nucleotide sequence ID" value="NZ_WXYX01000010.1"/>
</dbReference>
<dbReference type="PDB" id="1E44">
    <property type="method" value="X-ray"/>
    <property type="resolution" value="2.40 A"/>
    <property type="chains" value="A=1-85"/>
</dbReference>
<dbReference type="PDB" id="1JCH">
    <property type="method" value="X-ray"/>
    <property type="resolution" value="3.02 A"/>
    <property type="chains" value="B/D=2-85"/>
</dbReference>
<dbReference type="PDB" id="2B5U">
    <property type="method" value="X-ray"/>
    <property type="resolution" value="2.30 A"/>
    <property type="chains" value="B/D=2-85"/>
</dbReference>
<dbReference type="PDB" id="3EIP">
    <property type="method" value="X-ray"/>
    <property type="resolution" value="1.80 A"/>
    <property type="chains" value="A/B=2-85"/>
</dbReference>
<dbReference type="PDB" id="4UDM">
    <property type="method" value="X-ray"/>
    <property type="resolution" value="2.96 A"/>
    <property type="chains" value="A=1-85"/>
</dbReference>
<dbReference type="PDBsum" id="1E44"/>
<dbReference type="PDBsum" id="1JCH"/>
<dbReference type="PDBsum" id="2B5U"/>
<dbReference type="PDBsum" id="3EIP"/>
<dbReference type="PDBsum" id="4UDM"/>
<dbReference type="SMR" id="P02984"/>
<dbReference type="DIP" id="DIP-16993N"/>
<dbReference type="IntAct" id="P02984">
    <property type="interactions" value="1"/>
</dbReference>
<dbReference type="TCDB" id="8.B.24.4.1">
    <property type="family name" value="the colicin immunity protein (colip) functional family"/>
</dbReference>
<dbReference type="EvolutionaryTrace" id="P02984"/>
<dbReference type="GO" id="GO:0015643">
    <property type="term" value="F:toxic substance binding"/>
    <property type="evidence" value="ECO:0007669"/>
    <property type="project" value="InterPro"/>
</dbReference>
<dbReference type="GO" id="GO:0030153">
    <property type="term" value="P:bacteriocin immunity"/>
    <property type="evidence" value="ECO:0007669"/>
    <property type="project" value="UniProtKB-KW"/>
</dbReference>
<dbReference type="Gene3D" id="3.10.50.20">
    <property type="entry name" value="Cloacin immunity protein"/>
    <property type="match status" value="1"/>
</dbReference>
<dbReference type="InterPro" id="IPR003063">
    <property type="entry name" value="Cloacn_immnty_fam"/>
</dbReference>
<dbReference type="InterPro" id="IPR036528">
    <property type="entry name" value="Cloacn_immnty_sf"/>
</dbReference>
<dbReference type="Pfam" id="PF03513">
    <property type="entry name" value="Cloacin_immun"/>
    <property type="match status" value="1"/>
</dbReference>
<dbReference type="PRINTS" id="PR01296">
    <property type="entry name" value="CLOACNIMMNTY"/>
</dbReference>
<dbReference type="SUPFAM" id="SSF54552">
    <property type="entry name" value="Colicin E3 immunity protein"/>
    <property type="match status" value="1"/>
</dbReference>
<reference key="1">
    <citation type="journal article" date="1982" name="FEBS Lett.">
        <title>A plasmid region encoding the active fragment and the inhibitor protein of colicin E3-CA38.</title>
        <authorList>
            <person name="Masaki H."/>
            <person name="Ohta T."/>
        </authorList>
    </citation>
    <scope>NUCLEOTIDE SEQUENCE [GENOMIC DNA]</scope>
    <scope>FUNCTION</scope>
    <source>
        <plasmid>ColE3-CA38</plasmid>
    </source>
</reference>
<reference key="2">
    <citation type="journal article" date="1985" name="J. Mol. Biol.">
        <title>Colicin E3 and its immunity genes.</title>
        <authorList>
            <person name="Masaki H."/>
            <person name="Ohta T."/>
        </authorList>
    </citation>
    <scope>NUCLEOTIDE SEQUENCE [GENOMIC DNA]</scope>
    <scope>INDUCTION</scope>
    <source>
        <plasmid>ColE3-CA38</plasmid>
    </source>
</reference>
<reference key="3">
    <citation type="journal article" date="1983" name="Nucleic Acids Res.">
        <title>Nucleotide sequence for the catalytic domain of colicin E3 and its immunity protein. Evidence for a third gene overlapping colicin.</title>
        <authorList>
            <person name="Mock M."/>
            <person name="Miyada C.G."/>
            <person name="Gunsalus R.P."/>
        </authorList>
    </citation>
    <scope>NUCLEOTIDE SEQUENCE [GENOMIC DNA]</scope>
</reference>
<reference key="4">
    <citation type="journal article" date="1984" name="Nucleic Acids Res.">
        <title>Comparative nucleotide sequences encoding the immunity proteins and the carboxyl-terminal peptides of colicins E2 and E3.</title>
        <authorList>
            <person name="Lau P.C.K."/>
            <person name="Rowsome R.W."/>
            <person name="Zuker M."/>
            <person name="Visentin L.P."/>
        </authorList>
    </citation>
    <scope>NUCLEOTIDE SEQUENCE [GENOMIC DNA]</scope>
    <source>
        <plasmid>ColE3-CA38</plasmid>
    </source>
</reference>
<reference key="5">
    <citation type="journal article" date="1984" name="Biosci. Rep.">
        <title>The immunity genes of colicins E2 and E8 are closely related.</title>
        <authorList>
            <person name="Lau P.C."/>
            <person name="Rowsome R.W."/>
            <person name="Watson R.J."/>
            <person name="Visentin L.P."/>
        </authorList>
    </citation>
    <scope>NUCLEOTIDE SEQUENCE [GENOMIC DNA]</scope>
</reference>
<reference key="6">
    <citation type="journal article" date="1977" name="J. Biochem.">
        <title>Purification and characterization of active component and active fragment of colicin E3.</title>
        <authorList>
            <person name="Ohno S."/>
            <person name="Ohno-Iwashita Y."/>
            <person name="Suzuki K."/>
            <person name="Imahori K."/>
        </authorList>
    </citation>
    <scope>FUNCTION</scope>
    <scope>SUBUNIT</scope>
</reference>
<reference key="7">
    <citation type="journal article" date="1992" name="Biochemistry">
        <title>The secondary structure of the colicin E3 immunity protein as studied by 1H-1H and 1H-15N two-dimensional NMR spectroscopy.</title>
        <authorList>
            <person name="Yajima S."/>
            <person name="Muto Y."/>
            <person name="Yokoyama S."/>
            <person name="Masaki H."/>
            <person name="Uozumi T."/>
        </authorList>
    </citation>
    <scope>STRUCTURE BY NMR</scope>
</reference>
<reference evidence="13" key="8">
    <citation type="journal article" date="1999" name="Structure">
        <title>Crystal structure of colicin E3 immunity protein: an inhibitor of a ribosome-inactivating RNase.</title>
        <authorList>
            <person name="Li C."/>
            <person name="Zhao D."/>
            <person name="Djebli A."/>
            <person name="Shoham M."/>
        </authorList>
    </citation>
    <scope>X-RAY CRYSTALLOGRAPHY (1.80 ANGSTROMS) OF 2-85</scope>
</reference>
<reference evidence="11" key="9">
    <citation type="journal article" date="2000" name="Structure">
        <title>Inhibition of a ribosome-inactivating ribonuclease: the crystal structure of the cytotoxic domain of colicin E3 in complex with its immunity protein.</title>
        <authorList>
            <person name="Carr S."/>
            <person name="Walker D."/>
            <person name="James R."/>
            <person name="Kleanthous C."/>
            <person name="Hemmings A.M."/>
        </authorList>
    </citation>
    <scope>X-RAY CRYSTALLOGRAPHY (2.40 ANGSTROMS) IN COMPLEX WITH TOXIC COLICIN E3 FRAGMENT</scope>
    <scope>FUNCTION</scope>
    <scope>SUBUNIT</scope>
    <scope>DOMAIN</scope>
</reference>
<reference evidence="12" key="10">
    <citation type="journal article" date="2001" name="Mol. Cell">
        <title>Crystal structure of colicin E3: implications for cell entry and ribosome inactivation.</title>
        <authorList>
            <person name="Soelaiman S."/>
            <person name="Jakes K."/>
            <person name="Wu N."/>
            <person name="Li C."/>
            <person name="Shoham M."/>
        </authorList>
    </citation>
    <scope>X-RAY CRYSTALLOGRAPHY (3.02 ANGSTROMS) OF 2-85 IN COMPLEX WITH COLICIN E3</scope>
    <scope>FUNCTION</scope>
    <scope>SUBUNIT</scope>
    <scope>DOMAIN</scope>
</reference>
<protein>
    <recommendedName>
        <fullName>Colicin E3 immunity protein</fullName>
    </recommendedName>
    <alternativeName>
        <fullName evidence="6 7">Colicin E3 chain B</fullName>
    </alternativeName>
    <alternativeName>
        <fullName>ImmE3</fullName>
        <shortName evidence="5">Im3</shortName>
    </alternativeName>
    <alternativeName>
        <fullName>Microcin-E3 immunity protein</fullName>
    </alternativeName>
</protein>
<feature type="initiator methionine" description="Removed" evidence="9">
    <location>
        <position position="1"/>
    </location>
</feature>
<feature type="chain" id="PRO_0000218704" description="Colicin E3 immunity protein">
    <location>
        <begin position="2"/>
        <end position="85"/>
    </location>
</feature>
<feature type="strand" evidence="14">
    <location>
        <begin position="3"/>
        <end position="11"/>
    </location>
</feature>
<feature type="turn" evidence="14">
    <location>
        <begin position="12"/>
        <end position="14"/>
    </location>
</feature>
<feature type="strand" evidence="14">
    <location>
        <begin position="17"/>
        <end position="22"/>
    </location>
</feature>
<feature type="helix" evidence="14">
    <location>
        <begin position="31"/>
        <end position="34"/>
    </location>
</feature>
<feature type="turn" evidence="14">
    <location>
        <begin position="35"/>
        <end position="37"/>
    </location>
</feature>
<feature type="helix" evidence="14">
    <location>
        <begin position="40"/>
        <end position="43"/>
    </location>
</feature>
<feature type="strand" evidence="14">
    <location>
        <begin position="48"/>
        <end position="50"/>
    </location>
</feature>
<feature type="helix" evidence="14">
    <location>
        <begin position="53"/>
        <end position="55"/>
    </location>
</feature>
<feature type="helix" evidence="14">
    <location>
        <begin position="56"/>
        <end position="59"/>
    </location>
</feature>
<feature type="helix" evidence="14">
    <location>
        <begin position="60"/>
        <end position="62"/>
    </location>
</feature>
<feature type="turn" evidence="14">
    <location>
        <begin position="69"/>
        <end position="71"/>
    </location>
</feature>
<feature type="strand" evidence="14">
    <location>
        <begin position="72"/>
        <end position="80"/>
    </location>
</feature>
<comment type="function">
    <text evidence="1 2 3 4">The cognate immunity protein for colicin E3 (ColE3), protects cells which harbor the plasmid ColE3 against the toxic action of ColE3 (PubMed:10986462, PubMed:11741540, PubMed:336615, PubMed:6295812). This protein inhibits the 16S RNA hydrolyzing activity of ColE3 by binding with very high affinity to the C-terminal catalytic domain of ColE3 (PubMed:10986462, PubMed:11741540).</text>
</comment>
<comment type="subunit">
    <text evidence="1 2 3">Native colicin E3 is a 1:1 complex of A chain and protein B (Im3) (PubMed:10986462, PubMed:11741540, PubMed:336615). Binds between the translocation and cytotoxic RNase domains of intact ColE3, blocking access to the 16S rRNA substrate (PubMed:11741540). Forms a very tight 1:1 complex with the cytotoxic fragment (residues 456-551) of ColE3 (ceaC) (PubMed:10986462, PubMed:11741540).</text>
</comment>
<comment type="interaction">
    <interactant intactId="EBI-1029912">
        <id>P02984</id>
    </interactant>
    <interactant intactId="EBI-1029919">
        <id>P00646</id>
        <label>ceaC</label>
    </interactant>
    <organismsDiffer>false</organismsDiffer>
    <experiments>2</experiments>
</comment>
<comment type="induction">
    <text evidence="10">Probably induced by SOS-stress.</text>
</comment>
<comment type="domain">
    <text evidence="1 2">In complex with the cytotoxic fragment of colicin E3, Im3 residues 39-45 move outward to form a wide hydrophobic groove at the top, which interacts with an alpha-helix of colicin E3 (PubMed:10986462, PubMed:11741540).</text>
</comment>
<comment type="similarity">
    <text evidence="8">Belongs to the cloacin immunity protein family.</text>
</comment>
<sequence>MGLKLDLTWFDKSTEDFKGEEYSKDFGDDGSVMESLGVPFKDNVNNGCFDVIAEWVPLLQPYFNHQIDISDNEYFVSFDYRDGDW</sequence>
<evidence type="ECO:0000269" key="1">
    <source>
    </source>
</evidence>
<evidence type="ECO:0000269" key="2">
    <source>
    </source>
</evidence>
<evidence type="ECO:0000269" key="3">
    <source>
    </source>
</evidence>
<evidence type="ECO:0000269" key="4">
    <source>
    </source>
</evidence>
<evidence type="ECO:0000303" key="5">
    <source>
    </source>
</evidence>
<evidence type="ECO:0000303" key="6">
    <source>
    </source>
</evidence>
<evidence type="ECO:0000303" key="7">
    <source>
    </source>
</evidence>
<evidence type="ECO:0000305" key="8"/>
<evidence type="ECO:0000305" key="9">
    <source>
    </source>
</evidence>
<evidence type="ECO:0000305" key="10">
    <source>
    </source>
</evidence>
<evidence type="ECO:0007744" key="11">
    <source>
        <dbReference type="PDB" id="1E44"/>
    </source>
</evidence>
<evidence type="ECO:0007744" key="12">
    <source>
        <dbReference type="PDB" id="1JCH"/>
    </source>
</evidence>
<evidence type="ECO:0007744" key="13">
    <source>
        <dbReference type="PDB" id="3EIP"/>
    </source>
</evidence>
<evidence type="ECO:0007829" key="14">
    <source>
        <dbReference type="PDB" id="3EIP"/>
    </source>
</evidence>
<gene>
    <name evidence="7" type="primary">imm</name>
    <name type="synonym">ceiC</name>
    <name type="synonym">immB</name>
</gene>
<geneLocation type="plasmid">
    <name>ColE3-CA38</name>
</geneLocation>